<accession>P56138</accession>
<accession>O32632</accession>
<protein>
    <recommendedName>
        <fullName evidence="1">tRNA uridine 5-carboxymethylaminomethyl modification enzyme MnmG</fullName>
    </recommendedName>
    <alternativeName>
        <fullName evidence="1">Glucose-inhibited division protein A</fullName>
    </alternativeName>
</protein>
<reference key="1">
    <citation type="journal article" date="1997" name="Nature">
        <title>The complete genome sequence of the gastric pathogen Helicobacter pylori.</title>
        <authorList>
            <person name="Tomb J.-F."/>
            <person name="White O."/>
            <person name="Kerlavage A.R."/>
            <person name="Clayton R.A."/>
            <person name="Sutton G.G."/>
            <person name="Fleischmann R.D."/>
            <person name="Ketchum K.A."/>
            <person name="Klenk H.-P."/>
            <person name="Gill S.R."/>
            <person name="Dougherty B.A."/>
            <person name="Nelson K.E."/>
            <person name="Quackenbush J."/>
            <person name="Zhou L."/>
            <person name="Kirkness E.F."/>
            <person name="Peterson S.N."/>
            <person name="Loftus B.J."/>
            <person name="Richardson D.L."/>
            <person name="Dodson R.J."/>
            <person name="Khalak H.G."/>
            <person name="Glodek A."/>
            <person name="McKenney K."/>
            <person name="FitzGerald L.M."/>
            <person name="Lee N."/>
            <person name="Adams M.D."/>
            <person name="Hickey E.K."/>
            <person name="Berg D.E."/>
            <person name="Gocayne J.D."/>
            <person name="Utterback T.R."/>
            <person name="Peterson J.D."/>
            <person name="Kelley J.M."/>
            <person name="Cotton M.D."/>
            <person name="Weidman J.F."/>
            <person name="Fujii C."/>
            <person name="Bowman C."/>
            <person name="Watthey L."/>
            <person name="Wallin E."/>
            <person name="Hayes W.S."/>
            <person name="Borodovsky M."/>
            <person name="Karp P.D."/>
            <person name="Smith H.O."/>
            <person name="Fraser C.M."/>
            <person name="Venter J.C."/>
        </authorList>
    </citation>
    <scope>NUCLEOTIDE SEQUENCE [LARGE SCALE GENOMIC DNA]</scope>
    <source>
        <strain>ATCC 700392 / 26695</strain>
    </source>
</reference>
<reference key="2">
    <citation type="submission" date="1997-07" db="EMBL/GenBank/DDBJ databases">
        <authorList>
            <person name="Karita M."/>
            <person name="Etterbeek M.L."/>
            <person name="Forsyth M.H."/>
            <person name="Tummuru M.K.R."/>
            <person name="Blaser M.J."/>
        </authorList>
    </citation>
    <scope>NUCLEOTIDE SEQUENCE [GENOMIC DNA]</scope>
    <source>
        <strain>ATCC 49503 / 60190</strain>
    </source>
</reference>
<dbReference type="EMBL" id="AE000511">
    <property type="protein sequence ID" value="AAD07281.1"/>
    <property type="molecule type" value="Genomic_DNA"/>
</dbReference>
<dbReference type="EMBL" id="AF008565">
    <property type="protein sequence ID" value="AAB63296.1"/>
    <property type="molecule type" value="Genomic_DNA"/>
</dbReference>
<dbReference type="PIR" id="E64546">
    <property type="entry name" value="E64546"/>
</dbReference>
<dbReference type="RefSeq" id="NP_207011.1">
    <property type="nucleotide sequence ID" value="NC_000915.1"/>
</dbReference>
<dbReference type="RefSeq" id="WP_000238111.1">
    <property type="nucleotide sequence ID" value="NC_018939.1"/>
</dbReference>
<dbReference type="SMR" id="P56138"/>
<dbReference type="DIP" id="DIP-3538N"/>
<dbReference type="FunCoup" id="P56138">
    <property type="interactions" value="386"/>
</dbReference>
<dbReference type="IntAct" id="P56138">
    <property type="interactions" value="1"/>
</dbReference>
<dbReference type="MINT" id="P56138"/>
<dbReference type="STRING" id="85962.HP_0213"/>
<dbReference type="PaxDb" id="85962-C694_01070"/>
<dbReference type="EnsemblBacteria" id="AAD07281">
    <property type="protein sequence ID" value="AAD07281"/>
    <property type="gene ID" value="HP_0213"/>
</dbReference>
<dbReference type="KEGG" id="heo:C694_01070"/>
<dbReference type="KEGG" id="hpy:HP_0213"/>
<dbReference type="PATRIC" id="fig|85962.47.peg.230"/>
<dbReference type="eggNOG" id="COG0445">
    <property type="taxonomic scope" value="Bacteria"/>
</dbReference>
<dbReference type="InParanoid" id="P56138"/>
<dbReference type="OrthoDB" id="9815560at2"/>
<dbReference type="PhylomeDB" id="P56138"/>
<dbReference type="Proteomes" id="UP000000429">
    <property type="component" value="Chromosome"/>
</dbReference>
<dbReference type="GO" id="GO:0005829">
    <property type="term" value="C:cytosol"/>
    <property type="evidence" value="ECO:0000318"/>
    <property type="project" value="GO_Central"/>
</dbReference>
<dbReference type="GO" id="GO:0050660">
    <property type="term" value="F:flavin adenine dinucleotide binding"/>
    <property type="evidence" value="ECO:0000318"/>
    <property type="project" value="GO_Central"/>
</dbReference>
<dbReference type="GO" id="GO:0030488">
    <property type="term" value="P:tRNA methylation"/>
    <property type="evidence" value="ECO:0000318"/>
    <property type="project" value="GO_Central"/>
</dbReference>
<dbReference type="GO" id="GO:0002098">
    <property type="term" value="P:tRNA wobble uridine modification"/>
    <property type="evidence" value="ECO:0000318"/>
    <property type="project" value="GO_Central"/>
</dbReference>
<dbReference type="FunFam" id="1.10.150.570:FF:000001">
    <property type="entry name" value="tRNA uridine 5-carboxymethylaminomethyl modification enzyme MnmG"/>
    <property type="match status" value="1"/>
</dbReference>
<dbReference type="FunFam" id="3.50.50.60:FF:000002">
    <property type="entry name" value="tRNA uridine 5-carboxymethylaminomethyl modification enzyme MnmG"/>
    <property type="match status" value="1"/>
</dbReference>
<dbReference type="Gene3D" id="3.50.50.60">
    <property type="entry name" value="FAD/NAD(P)-binding domain"/>
    <property type="match status" value="2"/>
</dbReference>
<dbReference type="Gene3D" id="1.10.150.570">
    <property type="entry name" value="GidA associated domain, C-terminal subdomain"/>
    <property type="match status" value="1"/>
</dbReference>
<dbReference type="Gene3D" id="1.10.10.1800">
    <property type="entry name" value="tRNA uridine 5-carboxymethylaminomethyl modification enzyme MnmG/GidA"/>
    <property type="match status" value="1"/>
</dbReference>
<dbReference type="HAMAP" id="MF_00129">
    <property type="entry name" value="MnmG_GidA"/>
    <property type="match status" value="1"/>
</dbReference>
<dbReference type="InterPro" id="IPR036188">
    <property type="entry name" value="FAD/NAD-bd_sf"/>
</dbReference>
<dbReference type="InterPro" id="IPR049312">
    <property type="entry name" value="GIDA_C_N"/>
</dbReference>
<dbReference type="InterPro" id="IPR004416">
    <property type="entry name" value="MnmG"/>
</dbReference>
<dbReference type="InterPro" id="IPR002218">
    <property type="entry name" value="MnmG-rel"/>
</dbReference>
<dbReference type="InterPro" id="IPR020595">
    <property type="entry name" value="MnmG-rel_CS"/>
</dbReference>
<dbReference type="InterPro" id="IPR026904">
    <property type="entry name" value="MnmG_C"/>
</dbReference>
<dbReference type="InterPro" id="IPR047001">
    <property type="entry name" value="MnmG_C_subdom"/>
</dbReference>
<dbReference type="InterPro" id="IPR044920">
    <property type="entry name" value="MnmG_C_subdom_sf"/>
</dbReference>
<dbReference type="InterPro" id="IPR040131">
    <property type="entry name" value="MnmG_N"/>
</dbReference>
<dbReference type="NCBIfam" id="TIGR00136">
    <property type="entry name" value="mnmG_gidA"/>
    <property type="match status" value="1"/>
</dbReference>
<dbReference type="PANTHER" id="PTHR11806">
    <property type="entry name" value="GLUCOSE INHIBITED DIVISION PROTEIN A"/>
    <property type="match status" value="1"/>
</dbReference>
<dbReference type="PANTHER" id="PTHR11806:SF0">
    <property type="entry name" value="PROTEIN MTO1 HOMOLOG, MITOCHONDRIAL"/>
    <property type="match status" value="1"/>
</dbReference>
<dbReference type="Pfam" id="PF01134">
    <property type="entry name" value="GIDA"/>
    <property type="match status" value="1"/>
</dbReference>
<dbReference type="Pfam" id="PF21680">
    <property type="entry name" value="GIDA_C_1st"/>
    <property type="match status" value="1"/>
</dbReference>
<dbReference type="Pfam" id="PF13932">
    <property type="entry name" value="SAM_GIDA_C"/>
    <property type="match status" value="1"/>
</dbReference>
<dbReference type="PRINTS" id="PR00411">
    <property type="entry name" value="PNDRDTASEI"/>
</dbReference>
<dbReference type="SMART" id="SM01228">
    <property type="entry name" value="GIDA_assoc_3"/>
    <property type="match status" value="1"/>
</dbReference>
<dbReference type="SUPFAM" id="SSF51905">
    <property type="entry name" value="FAD/NAD(P)-binding domain"/>
    <property type="match status" value="1"/>
</dbReference>
<dbReference type="PROSITE" id="PS01280">
    <property type="entry name" value="GIDA_1"/>
    <property type="match status" value="1"/>
</dbReference>
<dbReference type="PROSITE" id="PS01281">
    <property type="entry name" value="GIDA_2"/>
    <property type="match status" value="1"/>
</dbReference>
<comment type="function">
    <text evidence="1">NAD-binding protein involved in the addition of a carboxymethylaminomethyl (cmnm) group at the wobble position (U34) of certain tRNAs, forming tRNA-cmnm(5)s(2)U34.</text>
</comment>
<comment type="cofactor">
    <cofactor evidence="1">
        <name>FAD</name>
        <dbReference type="ChEBI" id="CHEBI:57692"/>
    </cofactor>
</comment>
<comment type="subunit">
    <text evidence="1">Homodimer. Heterotetramer of two MnmE and two MnmG subunits.</text>
</comment>
<comment type="subcellular location">
    <subcellularLocation>
        <location evidence="1">Cytoplasm</location>
    </subcellularLocation>
</comment>
<comment type="similarity">
    <text evidence="1">Belongs to the MnmG family.</text>
</comment>
<organism>
    <name type="scientific">Helicobacter pylori (strain ATCC 700392 / 26695)</name>
    <name type="common">Campylobacter pylori</name>
    <dbReference type="NCBI Taxonomy" id="85962"/>
    <lineage>
        <taxon>Bacteria</taxon>
        <taxon>Pseudomonadati</taxon>
        <taxon>Campylobacterota</taxon>
        <taxon>Epsilonproteobacteria</taxon>
        <taxon>Campylobacterales</taxon>
        <taxon>Helicobacteraceae</taxon>
        <taxon>Helicobacter</taxon>
    </lineage>
</organism>
<name>MNMG_HELPY</name>
<sequence length="621" mass="69684">MVKESDILVVGGGHAGIEASLIAAKMGARVHLITMLIDTIGLASCNPAIGGLGKGHLTKEVDVLGGAMGIITDHSGLQYRVLNASKGPAVRGTRAQIDMDTYRILARNLVLNTPNLSVSQEMTESLILENDEVVGVTTNINNTYRAKKVIITTGTFLKGVVHIGEHQNQNGRFGENASNSLALNLRELGFKVDRLKTGTCPRVAGNSIDFEGLEEHFGDTNPPYFSYKTKDFNPTQLSCFITYTNPITHQIIRDNFHRAPLFSGQIEGIGPRYCPSIEDKINRFSEKERHQLFLEPQTIHKSEYYINGLSTSLPLDVQEKVIHSIKGLENALITRYGYAIEYDFIQPTELTHTLETKKIKGLYLAGQINGTTGYEEAAAQGLMAGINAVLALKNQAPFILKRNEAYIGVLIDDLITKGTNEPYRMFTSRAEYRLLLREDNTLFRLGEHAYRLGLMEEDFYKELKKDKQEIQDNLKRLKEYILTPSKEVLKRLDELDENPINDKVDGVSLLARDSFNAEKMRSFFSFLAPLNERVLEQIKIECKYNIYIEKQHENIAKMDSMLKVSIPKGFVFKGIPGLSLEAVEKLEKFRPKSLFEASEISGITPANLDVLHLYIHLRKNS</sequence>
<proteinExistence type="inferred from homology"/>
<evidence type="ECO:0000255" key="1">
    <source>
        <dbReference type="HAMAP-Rule" id="MF_00129"/>
    </source>
</evidence>
<gene>
    <name evidence="1" type="primary">mnmG</name>
    <name evidence="1" type="synonym">gidA</name>
    <name type="ordered locus">HP_0213</name>
</gene>
<feature type="chain" id="PRO_0000117112" description="tRNA uridine 5-carboxymethylaminomethyl modification enzyme MnmG">
    <location>
        <begin position="1"/>
        <end position="621"/>
    </location>
</feature>
<feature type="binding site" evidence="1">
    <location>
        <begin position="11"/>
        <end position="16"/>
    </location>
    <ligand>
        <name>FAD</name>
        <dbReference type="ChEBI" id="CHEBI:57692"/>
    </ligand>
</feature>
<feature type="binding site" evidence="1">
    <location>
        <begin position="270"/>
        <end position="284"/>
    </location>
    <ligand>
        <name>NAD(+)</name>
        <dbReference type="ChEBI" id="CHEBI:57540"/>
    </ligand>
</feature>
<feature type="sequence variant" description="In strain: 60190.">
    <original>V</original>
    <variation>I</variation>
    <location>
        <position position="10"/>
    </location>
</feature>
<feature type="sequence variant" description="In strain: 60190.">
    <original>L</original>
    <variation>F</variation>
    <location>
        <position position="105"/>
    </location>
</feature>
<feature type="sequence variant" description="In strain: 60190.">
    <original>D</original>
    <variation>E</variation>
    <location>
        <position position="193"/>
    </location>
</feature>
<feature type="sequence variant" description="In strain: 60190.">
    <original>T</original>
    <variation>A</variation>
    <location>
        <position position="220"/>
    </location>
</feature>
<feature type="sequence variant" description="In strain: 60190.">
    <original>S</original>
    <variation>N</variation>
    <location>
        <position position="302"/>
    </location>
</feature>
<feature type="sequence variant" description="In strain: 60190.">
    <original>T</original>
    <variation>A</variation>
    <location>
        <position position="353"/>
    </location>
</feature>
<feature type="sequence variant" description="In strain: 60190.">
    <original>A</original>
    <variation>D</variation>
    <location>
        <position position="379"/>
    </location>
</feature>
<feature type="sequence variant" description="In strain: 60190.">
    <original>I</original>
    <variation>V</variation>
    <location>
        <position position="415"/>
    </location>
</feature>
<feature type="sequence variant" description="In strain: 60190.">
    <original>E</original>
    <variation>Q</variation>
    <location>
        <position position="457"/>
    </location>
</feature>
<feature type="sequence variant" description="In strain: 60190.">
    <original>YI</original>
    <variation>CV</variation>
    <location>
        <begin position="480"/>
        <end position="481"/>
    </location>
</feature>
<feature type="sequence variant" description="In strain: 60190.">
    <original>EV</original>
    <variation>KL</variation>
    <location>
        <begin position="487"/>
        <end position="488"/>
    </location>
</feature>
<feature type="sequence variant" description="In strain: 60190.">
    <original>D</original>
    <variation>N</variation>
    <location>
        <position position="493"/>
    </location>
</feature>
<feature type="sequence variant" description="In strain: 60190.">
    <original>D</original>
    <variation>N</variation>
    <location>
        <position position="505"/>
    </location>
</feature>
<keyword id="KW-0963">Cytoplasm</keyword>
<keyword id="KW-0274">FAD</keyword>
<keyword id="KW-0285">Flavoprotein</keyword>
<keyword id="KW-0520">NAD</keyword>
<keyword id="KW-1185">Reference proteome</keyword>
<keyword id="KW-0819">tRNA processing</keyword>